<dbReference type="EC" id="3.7.1.3" evidence="1"/>
<dbReference type="EMBL" id="CM001235">
    <property type="protein sequence ID" value="EHA48171.1"/>
    <property type="molecule type" value="Genomic_DNA"/>
</dbReference>
<dbReference type="EMBL" id="CM001235">
    <property type="protein sequence ID" value="EHA48172.1"/>
    <property type="molecule type" value="Genomic_DNA"/>
</dbReference>
<dbReference type="RefSeq" id="XP_003717755.1">
    <property type="nucleotide sequence ID" value="XM_003717707.1"/>
</dbReference>
<dbReference type="RefSeq" id="XP_003717756.1">
    <property type="nucleotide sequence ID" value="XM_003717708.1"/>
</dbReference>
<dbReference type="SMR" id="A4UBV5"/>
<dbReference type="FunCoup" id="A4UBV5">
    <property type="interactions" value="202"/>
</dbReference>
<dbReference type="STRING" id="242507.A4UBV5"/>
<dbReference type="EnsemblFungi" id="MGG_10969T0">
    <property type="protein sequence ID" value="MGG_10969T0"/>
    <property type="gene ID" value="MGG_10969"/>
</dbReference>
<dbReference type="EnsemblFungi" id="MGG_10969T1">
    <property type="protein sequence ID" value="MGG_10969T1"/>
    <property type="gene ID" value="MGG_10969"/>
</dbReference>
<dbReference type="GeneID" id="2677723"/>
<dbReference type="KEGG" id="mgr:MGG_10969"/>
<dbReference type="VEuPathDB" id="FungiDB:MGG_10969"/>
<dbReference type="eggNOG" id="KOG3846">
    <property type="taxonomic scope" value="Eukaryota"/>
</dbReference>
<dbReference type="HOGENOM" id="CLU_003433_4_0_1"/>
<dbReference type="InParanoid" id="A4UBV5"/>
<dbReference type="OMA" id="SHVAYRS"/>
<dbReference type="OrthoDB" id="5978656at2759"/>
<dbReference type="UniPathway" id="UPA00253">
    <property type="reaction ID" value="UER00329"/>
</dbReference>
<dbReference type="UniPathway" id="UPA00334">
    <property type="reaction ID" value="UER00455"/>
</dbReference>
<dbReference type="Proteomes" id="UP000009058">
    <property type="component" value="Chromosome 5"/>
</dbReference>
<dbReference type="GO" id="GO:0005737">
    <property type="term" value="C:cytoplasm"/>
    <property type="evidence" value="ECO:0007669"/>
    <property type="project" value="UniProtKB-SubCell"/>
</dbReference>
<dbReference type="GO" id="GO:0030429">
    <property type="term" value="F:kynureninase activity"/>
    <property type="evidence" value="ECO:0007669"/>
    <property type="project" value="UniProtKB-UniRule"/>
</dbReference>
<dbReference type="GO" id="GO:0030170">
    <property type="term" value="F:pyridoxal phosphate binding"/>
    <property type="evidence" value="ECO:0007669"/>
    <property type="project" value="UniProtKB-UniRule"/>
</dbReference>
<dbReference type="GO" id="GO:0034354">
    <property type="term" value="P:'de novo' NAD biosynthetic process from L-tryptophan"/>
    <property type="evidence" value="ECO:0007669"/>
    <property type="project" value="UniProtKB-UniRule"/>
</dbReference>
<dbReference type="GO" id="GO:0043420">
    <property type="term" value="P:anthranilate metabolic process"/>
    <property type="evidence" value="ECO:0007669"/>
    <property type="project" value="UniProtKB-UniRule"/>
</dbReference>
<dbReference type="GO" id="GO:0097053">
    <property type="term" value="P:L-kynurenine catabolic process"/>
    <property type="evidence" value="ECO:0007669"/>
    <property type="project" value="UniProtKB-UniRule"/>
</dbReference>
<dbReference type="GO" id="GO:0019441">
    <property type="term" value="P:L-tryptophan catabolic process to kynurenine"/>
    <property type="evidence" value="ECO:0007669"/>
    <property type="project" value="TreeGrafter"/>
</dbReference>
<dbReference type="GO" id="GO:0019805">
    <property type="term" value="P:quinolinate biosynthetic process"/>
    <property type="evidence" value="ECO:0007669"/>
    <property type="project" value="UniProtKB-UniRule"/>
</dbReference>
<dbReference type="FunFam" id="3.40.640.10:FF:000031">
    <property type="entry name" value="Kynureninase"/>
    <property type="match status" value="1"/>
</dbReference>
<dbReference type="Gene3D" id="3.90.1150.10">
    <property type="entry name" value="Aspartate Aminotransferase, domain 1"/>
    <property type="match status" value="1"/>
</dbReference>
<dbReference type="Gene3D" id="3.40.640.10">
    <property type="entry name" value="Type I PLP-dependent aspartate aminotransferase-like (Major domain)"/>
    <property type="match status" value="1"/>
</dbReference>
<dbReference type="HAMAP" id="MF_01970">
    <property type="entry name" value="Kynureninase"/>
    <property type="match status" value="1"/>
</dbReference>
<dbReference type="InterPro" id="IPR000192">
    <property type="entry name" value="Aminotrans_V_dom"/>
</dbReference>
<dbReference type="InterPro" id="IPR010111">
    <property type="entry name" value="Kynureninase"/>
</dbReference>
<dbReference type="InterPro" id="IPR015424">
    <property type="entry name" value="PyrdxlP-dep_Trfase"/>
</dbReference>
<dbReference type="InterPro" id="IPR015421">
    <property type="entry name" value="PyrdxlP-dep_Trfase_major"/>
</dbReference>
<dbReference type="InterPro" id="IPR015422">
    <property type="entry name" value="PyrdxlP-dep_Trfase_small"/>
</dbReference>
<dbReference type="NCBIfam" id="TIGR01814">
    <property type="entry name" value="kynureninase"/>
    <property type="match status" value="1"/>
</dbReference>
<dbReference type="PANTHER" id="PTHR14084">
    <property type="entry name" value="KYNURENINASE"/>
    <property type="match status" value="1"/>
</dbReference>
<dbReference type="PANTHER" id="PTHR14084:SF2">
    <property type="entry name" value="KYNURENINASE 2"/>
    <property type="match status" value="1"/>
</dbReference>
<dbReference type="Pfam" id="PF00266">
    <property type="entry name" value="Aminotran_5"/>
    <property type="match status" value="1"/>
</dbReference>
<dbReference type="Pfam" id="PF22580">
    <property type="entry name" value="KYNU_C"/>
    <property type="match status" value="1"/>
</dbReference>
<dbReference type="PIRSF" id="PIRSF038800">
    <property type="entry name" value="KYNU"/>
    <property type="match status" value="1"/>
</dbReference>
<dbReference type="SUPFAM" id="SSF53383">
    <property type="entry name" value="PLP-dependent transferases"/>
    <property type="match status" value="1"/>
</dbReference>
<protein>
    <recommendedName>
        <fullName evidence="1">Kynureninase</fullName>
        <ecNumber evidence="1">3.7.1.3</ecNumber>
    </recommendedName>
    <alternativeName>
        <fullName evidence="1">Biosynthesis of nicotinic acid protein 5</fullName>
    </alternativeName>
    <alternativeName>
        <fullName evidence="1">L-kynurenine hydrolase</fullName>
    </alternativeName>
</protein>
<name>KYNU_PYRO7</name>
<keyword id="KW-0963">Cytoplasm</keyword>
<keyword id="KW-0378">Hydrolase</keyword>
<keyword id="KW-0662">Pyridine nucleotide biosynthesis</keyword>
<keyword id="KW-0663">Pyridoxal phosphate</keyword>
<keyword id="KW-1185">Reference proteome</keyword>
<organism>
    <name type="scientific">Pyricularia oryzae (strain 70-15 / ATCC MYA-4617 / FGSC 8958)</name>
    <name type="common">Rice blast fungus</name>
    <name type="synonym">Magnaporthe oryzae</name>
    <dbReference type="NCBI Taxonomy" id="242507"/>
    <lineage>
        <taxon>Eukaryota</taxon>
        <taxon>Fungi</taxon>
        <taxon>Dikarya</taxon>
        <taxon>Ascomycota</taxon>
        <taxon>Pezizomycotina</taxon>
        <taxon>Sordariomycetes</taxon>
        <taxon>Sordariomycetidae</taxon>
        <taxon>Magnaporthales</taxon>
        <taxon>Pyriculariaceae</taxon>
        <taxon>Pyricularia</taxon>
    </lineage>
</organism>
<proteinExistence type="inferred from homology"/>
<gene>
    <name evidence="1" type="primary">BNA5</name>
    <name type="ORF">MGG_10969</name>
</gene>
<comment type="function">
    <text evidence="1">Catalyzes the cleavage of L-kynurenine (L-Kyn) and L-3-hydroxykynurenine (L-3OHKyn) into anthranilic acid (AA) and 3-hydroxyanthranilic acid (3-OHAA), respectively.</text>
</comment>
<comment type="catalytic activity">
    <reaction evidence="1">
        <text>L-kynurenine + H2O = anthranilate + L-alanine + H(+)</text>
        <dbReference type="Rhea" id="RHEA:16813"/>
        <dbReference type="ChEBI" id="CHEBI:15377"/>
        <dbReference type="ChEBI" id="CHEBI:15378"/>
        <dbReference type="ChEBI" id="CHEBI:16567"/>
        <dbReference type="ChEBI" id="CHEBI:57959"/>
        <dbReference type="ChEBI" id="CHEBI:57972"/>
        <dbReference type="EC" id="3.7.1.3"/>
    </reaction>
</comment>
<comment type="catalytic activity">
    <reaction evidence="1">
        <text>3-hydroxy-L-kynurenine + H2O = 3-hydroxyanthranilate + L-alanine + H(+)</text>
        <dbReference type="Rhea" id="RHEA:25143"/>
        <dbReference type="ChEBI" id="CHEBI:15377"/>
        <dbReference type="ChEBI" id="CHEBI:15378"/>
        <dbReference type="ChEBI" id="CHEBI:36559"/>
        <dbReference type="ChEBI" id="CHEBI:57972"/>
        <dbReference type="ChEBI" id="CHEBI:58125"/>
        <dbReference type="EC" id="3.7.1.3"/>
    </reaction>
</comment>
<comment type="cofactor">
    <cofactor evidence="1">
        <name>pyridoxal 5'-phosphate</name>
        <dbReference type="ChEBI" id="CHEBI:597326"/>
    </cofactor>
</comment>
<comment type="pathway">
    <text evidence="1">Amino-acid degradation; L-kynurenine degradation; L-alanine and anthranilate from L-kynurenine: step 1/1.</text>
</comment>
<comment type="pathway">
    <text evidence="1">Cofactor biosynthesis; NAD(+) biosynthesis; quinolinate from L-kynurenine: step 2/3.</text>
</comment>
<comment type="subunit">
    <text evidence="1">Homodimer.</text>
</comment>
<comment type="subcellular location">
    <subcellularLocation>
        <location evidence="1">Cytoplasm</location>
    </subcellularLocation>
</comment>
<comment type="similarity">
    <text evidence="1">Belongs to the kynureninase family.</text>
</comment>
<accession>A4UBV5</accession>
<accession>G4NBX0</accession>
<feature type="chain" id="PRO_0000360870" description="Kynureninase">
    <location>
        <begin position="1"/>
        <end position="497"/>
    </location>
</feature>
<feature type="region of interest" description="Disordered" evidence="2">
    <location>
        <begin position="59"/>
        <end position="86"/>
    </location>
</feature>
<feature type="compositionally biased region" description="Polar residues" evidence="2">
    <location>
        <begin position="75"/>
        <end position="86"/>
    </location>
</feature>
<feature type="binding site" evidence="1">
    <location>
        <position position="166"/>
    </location>
    <ligand>
        <name>pyridoxal 5'-phosphate</name>
        <dbReference type="ChEBI" id="CHEBI:597326"/>
    </ligand>
</feature>
<feature type="binding site" evidence="1">
    <location>
        <position position="167"/>
    </location>
    <ligand>
        <name>pyridoxal 5'-phosphate</name>
        <dbReference type="ChEBI" id="CHEBI:597326"/>
    </ligand>
</feature>
<feature type="binding site" evidence="1">
    <location>
        <begin position="194"/>
        <end position="197"/>
    </location>
    <ligand>
        <name>pyridoxal 5'-phosphate</name>
        <dbReference type="ChEBI" id="CHEBI:597326"/>
    </ligand>
</feature>
<feature type="binding site" evidence="1">
    <location>
        <position position="278"/>
    </location>
    <ligand>
        <name>pyridoxal 5'-phosphate</name>
        <dbReference type="ChEBI" id="CHEBI:597326"/>
    </ligand>
</feature>
<feature type="binding site" evidence="1">
    <location>
        <position position="281"/>
    </location>
    <ligand>
        <name>pyridoxal 5'-phosphate</name>
        <dbReference type="ChEBI" id="CHEBI:597326"/>
    </ligand>
</feature>
<feature type="binding site" evidence="1">
    <location>
        <position position="303"/>
    </location>
    <ligand>
        <name>pyridoxal 5'-phosphate</name>
        <dbReference type="ChEBI" id="CHEBI:597326"/>
    </ligand>
</feature>
<feature type="binding site" evidence="1">
    <location>
        <position position="337"/>
    </location>
    <ligand>
        <name>pyridoxal 5'-phosphate</name>
        <dbReference type="ChEBI" id="CHEBI:597326"/>
    </ligand>
</feature>
<feature type="binding site" evidence="1">
    <location>
        <position position="365"/>
    </location>
    <ligand>
        <name>pyridoxal 5'-phosphate</name>
        <dbReference type="ChEBI" id="CHEBI:597326"/>
    </ligand>
</feature>
<feature type="modified residue" description="N6-(pyridoxal phosphate)lysine" evidence="1">
    <location>
        <position position="304"/>
    </location>
</feature>
<sequence>MAATQKSLCAIPADPIEFPADANTLDYARSEDAKCPIRHMREHFIFPTRASLKKKALDGRLPAYPPNHAKPGETATAQNGTSNTNDDNVTPAVYFCGNSLGLQPKATRDHINAQLETWASIGVHGHFTSWDNSPLKSWQDMAADCAAQSASVVGASPDEIAIMNTLTANLHFMMASFYRPTEKRHKIISEWKPFPSDTYAIASQIQWHGFDTATSLVELHPDENYYISTEKILATIDEHAESTALLLLPGIQYWSGQLFDMPLITAHARAKGIVVGWDLAHAVGNVPLSLHDWDVDFAIWCTYKYLNAGPGAIAGAFVHERHGKVDSDGFKLRLSGWYGNNKATRFNMAKDFDPTPGAQGWVVSNPSGIDLASLGAALSVYNLTTPADLRKKSLWLTAYAEHLLNGILKDEAASSAGDGKKPAFRIITPSNKNERGAQLSVLLREGLLDVVGEKMEAAGVVCDRRKPDVMRVAPVPMYNSYEDVWRCVDALRKAVMS</sequence>
<evidence type="ECO:0000255" key="1">
    <source>
        <dbReference type="HAMAP-Rule" id="MF_03017"/>
    </source>
</evidence>
<evidence type="ECO:0000256" key="2">
    <source>
        <dbReference type="SAM" id="MobiDB-lite"/>
    </source>
</evidence>
<reference key="1">
    <citation type="journal article" date="2005" name="Nature">
        <title>The genome sequence of the rice blast fungus Magnaporthe grisea.</title>
        <authorList>
            <person name="Dean R.A."/>
            <person name="Talbot N.J."/>
            <person name="Ebbole D.J."/>
            <person name="Farman M.L."/>
            <person name="Mitchell T.K."/>
            <person name="Orbach M.J."/>
            <person name="Thon M.R."/>
            <person name="Kulkarni R."/>
            <person name="Xu J.-R."/>
            <person name="Pan H."/>
            <person name="Read N.D."/>
            <person name="Lee Y.-H."/>
            <person name="Carbone I."/>
            <person name="Brown D."/>
            <person name="Oh Y.Y."/>
            <person name="Donofrio N."/>
            <person name="Jeong J.S."/>
            <person name="Soanes D.M."/>
            <person name="Djonovic S."/>
            <person name="Kolomiets E."/>
            <person name="Rehmeyer C."/>
            <person name="Li W."/>
            <person name="Harding M."/>
            <person name="Kim S."/>
            <person name="Lebrun M.-H."/>
            <person name="Bohnert H."/>
            <person name="Coughlan S."/>
            <person name="Butler J."/>
            <person name="Calvo S.E."/>
            <person name="Ma L.-J."/>
            <person name="Nicol R."/>
            <person name="Purcell S."/>
            <person name="Nusbaum C."/>
            <person name="Galagan J.E."/>
            <person name="Birren B.W."/>
        </authorList>
    </citation>
    <scope>NUCLEOTIDE SEQUENCE [LARGE SCALE GENOMIC DNA]</scope>
    <source>
        <strain>70-15 / ATCC MYA-4617 / FGSC 8958</strain>
    </source>
</reference>